<name>RL6_YERPB</name>
<proteinExistence type="inferred from homology"/>
<protein>
    <recommendedName>
        <fullName evidence="1">Large ribosomal subunit protein uL6</fullName>
    </recommendedName>
    <alternativeName>
        <fullName evidence="2">50S ribosomal protein L6</fullName>
    </alternativeName>
</protein>
<comment type="function">
    <text evidence="1">This protein binds to the 23S rRNA, and is important in its secondary structure. It is located near the subunit interface in the base of the L7/L12 stalk, and near the tRNA binding site of the peptidyltransferase center.</text>
</comment>
<comment type="subunit">
    <text evidence="1">Part of the 50S ribosomal subunit.</text>
</comment>
<comment type="similarity">
    <text evidence="1">Belongs to the universal ribosomal protein uL6 family.</text>
</comment>
<sequence length="177" mass="18927">MSRVAKAPVVIPAGVEVKLNGQVISIKGKNGELTRTVHSAVEVKQEENTLTFAPREGAVDGWAQAGTTRALLNSMVIGVTEGFTKKLQLVGVGYRAAVKGNVVNLALGFSHPVDHELPAGITAECPTQTEIVLKGADKQVIGQVAADLRAYRRPEPYKGKGVRYADEVVRTKEAKKK</sequence>
<accession>B2K522</accession>
<organism>
    <name type="scientific">Yersinia pseudotuberculosis serotype IB (strain PB1/+)</name>
    <dbReference type="NCBI Taxonomy" id="502801"/>
    <lineage>
        <taxon>Bacteria</taxon>
        <taxon>Pseudomonadati</taxon>
        <taxon>Pseudomonadota</taxon>
        <taxon>Gammaproteobacteria</taxon>
        <taxon>Enterobacterales</taxon>
        <taxon>Yersiniaceae</taxon>
        <taxon>Yersinia</taxon>
    </lineage>
</organism>
<gene>
    <name evidence="1" type="primary">rplF</name>
    <name type="ordered locus">YPTS_3875</name>
</gene>
<keyword id="KW-0687">Ribonucleoprotein</keyword>
<keyword id="KW-0689">Ribosomal protein</keyword>
<keyword id="KW-0694">RNA-binding</keyword>
<keyword id="KW-0699">rRNA-binding</keyword>
<feature type="chain" id="PRO_1000144072" description="Large ribosomal subunit protein uL6">
    <location>
        <begin position="1"/>
        <end position="177"/>
    </location>
</feature>
<dbReference type="EMBL" id="CP001048">
    <property type="protein sequence ID" value="ACC90824.1"/>
    <property type="molecule type" value="Genomic_DNA"/>
</dbReference>
<dbReference type="RefSeq" id="WP_002213334.1">
    <property type="nucleotide sequence ID" value="NZ_CP009780.1"/>
</dbReference>
<dbReference type="SMR" id="B2K522"/>
<dbReference type="GeneID" id="96663181"/>
<dbReference type="KEGG" id="ypb:YPTS_3875"/>
<dbReference type="PATRIC" id="fig|502801.10.peg.3340"/>
<dbReference type="GO" id="GO:0022625">
    <property type="term" value="C:cytosolic large ribosomal subunit"/>
    <property type="evidence" value="ECO:0007669"/>
    <property type="project" value="TreeGrafter"/>
</dbReference>
<dbReference type="GO" id="GO:0019843">
    <property type="term" value="F:rRNA binding"/>
    <property type="evidence" value="ECO:0007669"/>
    <property type="project" value="UniProtKB-UniRule"/>
</dbReference>
<dbReference type="GO" id="GO:0003735">
    <property type="term" value="F:structural constituent of ribosome"/>
    <property type="evidence" value="ECO:0007669"/>
    <property type="project" value="InterPro"/>
</dbReference>
<dbReference type="GO" id="GO:0002181">
    <property type="term" value="P:cytoplasmic translation"/>
    <property type="evidence" value="ECO:0007669"/>
    <property type="project" value="TreeGrafter"/>
</dbReference>
<dbReference type="FunFam" id="3.90.930.12:FF:000001">
    <property type="entry name" value="50S ribosomal protein L6"/>
    <property type="match status" value="1"/>
</dbReference>
<dbReference type="FunFam" id="3.90.930.12:FF:000002">
    <property type="entry name" value="50S ribosomal protein L6"/>
    <property type="match status" value="1"/>
</dbReference>
<dbReference type="Gene3D" id="3.90.930.12">
    <property type="entry name" value="Ribosomal protein L6, alpha-beta domain"/>
    <property type="match status" value="2"/>
</dbReference>
<dbReference type="HAMAP" id="MF_01365_B">
    <property type="entry name" value="Ribosomal_uL6_B"/>
    <property type="match status" value="1"/>
</dbReference>
<dbReference type="InterPro" id="IPR000702">
    <property type="entry name" value="Ribosomal_uL6-like"/>
</dbReference>
<dbReference type="InterPro" id="IPR036789">
    <property type="entry name" value="Ribosomal_uL6-like_a/b-dom_sf"/>
</dbReference>
<dbReference type="InterPro" id="IPR020040">
    <property type="entry name" value="Ribosomal_uL6_a/b-dom"/>
</dbReference>
<dbReference type="InterPro" id="IPR019906">
    <property type="entry name" value="Ribosomal_uL6_bac-type"/>
</dbReference>
<dbReference type="InterPro" id="IPR002358">
    <property type="entry name" value="Ribosomal_uL6_CS"/>
</dbReference>
<dbReference type="NCBIfam" id="TIGR03654">
    <property type="entry name" value="L6_bact"/>
    <property type="match status" value="1"/>
</dbReference>
<dbReference type="PANTHER" id="PTHR11655">
    <property type="entry name" value="60S/50S RIBOSOMAL PROTEIN L6/L9"/>
    <property type="match status" value="1"/>
</dbReference>
<dbReference type="PANTHER" id="PTHR11655:SF14">
    <property type="entry name" value="LARGE RIBOSOMAL SUBUNIT PROTEIN UL6M"/>
    <property type="match status" value="1"/>
</dbReference>
<dbReference type="Pfam" id="PF00347">
    <property type="entry name" value="Ribosomal_L6"/>
    <property type="match status" value="2"/>
</dbReference>
<dbReference type="PIRSF" id="PIRSF002162">
    <property type="entry name" value="Ribosomal_L6"/>
    <property type="match status" value="1"/>
</dbReference>
<dbReference type="PRINTS" id="PR00059">
    <property type="entry name" value="RIBOSOMALL6"/>
</dbReference>
<dbReference type="SUPFAM" id="SSF56053">
    <property type="entry name" value="Ribosomal protein L6"/>
    <property type="match status" value="2"/>
</dbReference>
<dbReference type="PROSITE" id="PS00525">
    <property type="entry name" value="RIBOSOMAL_L6_1"/>
    <property type="match status" value="1"/>
</dbReference>
<reference key="1">
    <citation type="submission" date="2008-04" db="EMBL/GenBank/DDBJ databases">
        <title>Complete sequence of Yersinia pseudotuberculosis PB1/+.</title>
        <authorList>
            <person name="Copeland A."/>
            <person name="Lucas S."/>
            <person name="Lapidus A."/>
            <person name="Glavina del Rio T."/>
            <person name="Dalin E."/>
            <person name="Tice H."/>
            <person name="Bruce D."/>
            <person name="Goodwin L."/>
            <person name="Pitluck S."/>
            <person name="Munk A.C."/>
            <person name="Brettin T."/>
            <person name="Detter J.C."/>
            <person name="Han C."/>
            <person name="Tapia R."/>
            <person name="Schmutz J."/>
            <person name="Larimer F."/>
            <person name="Land M."/>
            <person name="Hauser L."/>
            <person name="Challacombe J.F."/>
            <person name="Green L."/>
            <person name="Lindler L.E."/>
            <person name="Nikolich M.P."/>
            <person name="Richardson P."/>
        </authorList>
    </citation>
    <scope>NUCLEOTIDE SEQUENCE [LARGE SCALE GENOMIC DNA]</scope>
    <source>
        <strain>PB1/+</strain>
    </source>
</reference>
<evidence type="ECO:0000255" key="1">
    <source>
        <dbReference type="HAMAP-Rule" id="MF_01365"/>
    </source>
</evidence>
<evidence type="ECO:0000305" key="2"/>